<gene>
    <name evidence="1" type="primary">cobD</name>
    <name type="ordered locus">BR1294</name>
    <name type="ordered locus">BS1330_I1290</name>
</gene>
<comment type="function">
    <text evidence="1">Converts cobyric acid to cobinamide by the addition of aminopropanol on the F carboxylic group.</text>
</comment>
<comment type="pathway">
    <text evidence="1">Cofactor biosynthesis; adenosylcobalamin biosynthesis.</text>
</comment>
<comment type="subcellular location">
    <subcellularLocation>
        <location evidence="1">Cell membrane</location>
        <topology evidence="1">Multi-pass membrane protein</topology>
    </subcellularLocation>
</comment>
<comment type="similarity">
    <text evidence="1">Belongs to the CobD/CbiB family.</text>
</comment>
<comment type="sequence caution" evidence="2">
    <conflict type="erroneous initiation">
        <sequence resource="EMBL-CDS" id="AAN30212"/>
    </conflict>
</comment>
<comment type="sequence caution" evidence="2">
    <conflict type="erroneous initiation">
        <sequence resource="EMBL-CDS" id="AEM18630"/>
    </conflict>
    <text>Extended N-terminus.</text>
</comment>
<dbReference type="EMBL" id="AE014291">
    <property type="protein sequence ID" value="AAN30212.1"/>
    <property type="status" value="ALT_INIT"/>
    <property type="molecule type" value="Genomic_DNA"/>
</dbReference>
<dbReference type="EMBL" id="CP002997">
    <property type="protein sequence ID" value="AEM18630.1"/>
    <property type="status" value="ALT_INIT"/>
    <property type="molecule type" value="Genomic_DNA"/>
</dbReference>
<dbReference type="GeneID" id="45052323"/>
<dbReference type="KEGG" id="bms:BR1294"/>
<dbReference type="KEGG" id="bsi:BS1330_I1290"/>
<dbReference type="PATRIC" id="fig|204722.21.peg.1689"/>
<dbReference type="HOGENOM" id="CLU_054212_0_1_5"/>
<dbReference type="PhylomeDB" id="Q8G022"/>
<dbReference type="UniPathway" id="UPA00148"/>
<dbReference type="Proteomes" id="UP000007104">
    <property type="component" value="Chromosome I"/>
</dbReference>
<dbReference type="GO" id="GO:0005886">
    <property type="term" value="C:plasma membrane"/>
    <property type="evidence" value="ECO:0007669"/>
    <property type="project" value="UniProtKB-SubCell"/>
</dbReference>
<dbReference type="GO" id="GO:0015420">
    <property type="term" value="F:ABC-type vitamin B12 transporter activity"/>
    <property type="evidence" value="ECO:0007669"/>
    <property type="project" value="UniProtKB-UniRule"/>
</dbReference>
<dbReference type="GO" id="GO:0048472">
    <property type="term" value="F:threonine-phosphate decarboxylase activity"/>
    <property type="evidence" value="ECO:0007669"/>
    <property type="project" value="InterPro"/>
</dbReference>
<dbReference type="GO" id="GO:0009236">
    <property type="term" value="P:cobalamin biosynthetic process"/>
    <property type="evidence" value="ECO:0007669"/>
    <property type="project" value="UniProtKB-UniRule"/>
</dbReference>
<dbReference type="HAMAP" id="MF_00024">
    <property type="entry name" value="CobD_CbiB"/>
    <property type="match status" value="1"/>
</dbReference>
<dbReference type="InterPro" id="IPR004485">
    <property type="entry name" value="Cobalamin_biosynth_CobD/CbiB"/>
</dbReference>
<dbReference type="NCBIfam" id="TIGR00380">
    <property type="entry name" value="cobal_cbiB"/>
    <property type="match status" value="1"/>
</dbReference>
<dbReference type="PANTHER" id="PTHR34308">
    <property type="entry name" value="COBALAMIN BIOSYNTHESIS PROTEIN CBIB"/>
    <property type="match status" value="1"/>
</dbReference>
<dbReference type="PANTHER" id="PTHR34308:SF1">
    <property type="entry name" value="COBALAMIN BIOSYNTHESIS PROTEIN CBIB"/>
    <property type="match status" value="1"/>
</dbReference>
<dbReference type="Pfam" id="PF03186">
    <property type="entry name" value="CobD_Cbib"/>
    <property type="match status" value="1"/>
</dbReference>
<accession>Q8G022</accession>
<accession>G0KAQ3</accession>
<proteinExistence type="inferred from homology"/>
<reference key="1">
    <citation type="journal article" date="2002" name="Proc. Natl. Acad. Sci. U.S.A.">
        <title>The Brucella suis genome reveals fundamental similarities between animal and plant pathogens and symbionts.</title>
        <authorList>
            <person name="Paulsen I.T."/>
            <person name="Seshadri R."/>
            <person name="Nelson K.E."/>
            <person name="Eisen J.A."/>
            <person name="Heidelberg J.F."/>
            <person name="Read T.D."/>
            <person name="Dodson R.J."/>
            <person name="Umayam L.A."/>
            <person name="Brinkac L.M."/>
            <person name="Beanan M.J."/>
            <person name="Daugherty S.C."/>
            <person name="DeBoy R.T."/>
            <person name="Durkin A.S."/>
            <person name="Kolonay J.F."/>
            <person name="Madupu R."/>
            <person name="Nelson W.C."/>
            <person name="Ayodeji B."/>
            <person name="Kraul M."/>
            <person name="Shetty J."/>
            <person name="Malek J.A."/>
            <person name="Van Aken S.E."/>
            <person name="Riedmuller S."/>
            <person name="Tettelin H."/>
            <person name="Gill S.R."/>
            <person name="White O."/>
            <person name="Salzberg S.L."/>
            <person name="Hoover D.L."/>
            <person name="Lindler L.E."/>
            <person name="Halling S.M."/>
            <person name="Boyle S.M."/>
            <person name="Fraser C.M."/>
        </authorList>
    </citation>
    <scope>NUCLEOTIDE SEQUENCE [LARGE SCALE GENOMIC DNA]</scope>
    <source>
        <strain>1330</strain>
    </source>
</reference>
<reference key="2">
    <citation type="journal article" date="2011" name="J. Bacteriol.">
        <title>Revised genome sequence of Brucella suis 1330.</title>
        <authorList>
            <person name="Tae H."/>
            <person name="Shallom S."/>
            <person name="Settlage R."/>
            <person name="Preston D."/>
            <person name="Adams L.G."/>
            <person name="Garner H.R."/>
        </authorList>
    </citation>
    <scope>NUCLEOTIDE SEQUENCE [LARGE SCALE GENOMIC DNA]</scope>
    <source>
        <strain>1330</strain>
    </source>
</reference>
<keyword id="KW-1003">Cell membrane</keyword>
<keyword id="KW-0169">Cobalamin biosynthesis</keyword>
<keyword id="KW-0472">Membrane</keyword>
<keyword id="KW-0812">Transmembrane</keyword>
<keyword id="KW-1133">Transmembrane helix</keyword>
<name>COBD_BRUSU</name>
<organism>
    <name type="scientific">Brucella suis biovar 1 (strain 1330)</name>
    <dbReference type="NCBI Taxonomy" id="204722"/>
    <lineage>
        <taxon>Bacteria</taxon>
        <taxon>Pseudomonadati</taxon>
        <taxon>Pseudomonadota</taxon>
        <taxon>Alphaproteobacteria</taxon>
        <taxon>Hyphomicrobiales</taxon>
        <taxon>Brucellaceae</taxon>
        <taxon>Brucella/Ochrobactrum group</taxon>
        <taxon>Brucella</taxon>
    </lineage>
</organism>
<evidence type="ECO:0000255" key="1">
    <source>
        <dbReference type="HAMAP-Rule" id="MF_00024"/>
    </source>
</evidence>
<evidence type="ECO:0000305" key="2"/>
<sequence>MEIKLIVLSLALLLDRFIGDPPLLWQRISHPVVLLGKAISWGEKNFNDSSLPPSTLRRNGMWLTVGLVAACIFAGLVIRSILPHAGTAGAIVEVVIVAILLAQKSLADHVQAVAQALRDDGIEGGRKAVSMIVGRNPDRLDEGGVSRAAIESLAENASDGIVAPAFWFLVGGLPGLFAYKLINTADSMIGHLNDRYRDFGRFAAKLDDVANYIPARLTGLLAALATSLGHGREAGRQALSIMCRDARLHRSPNAGWPEAAFAGALGLALAGPRQYGAETVEGPMLNATGKREAEARDIDAALVLFWSTMSLMTGLVIAASLVGLFVG</sequence>
<protein>
    <recommendedName>
        <fullName evidence="1">Cobalamin biosynthesis protein CobD</fullName>
    </recommendedName>
</protein>
<feature type="chain" id="PRO_0000150923" description="Cobalamin biosynthesis protein CobD">
    <location>
        <begin position="1"/>
        <end position="327"/>
    </location>
</feature>
<feature type="transmembrane region" description="Helical" evidence="1">
    <location>
        <begin position="61"/>
        <end position="78"/>
    </location>
</feature>
<feature type="transmembrane region" description="Helical" evidence="1">
    <location>
        <begin position="80"/>
        <end position="102"/>
    </location>
</feature>
<feature type="transmembrane region" description="Helical" evidence="1">
    <location>
        <begin position="160"/>
        <end position="182"/>
    </location>
</feature>
<feature type="transmembrane region" description="Helical" evidence="1">
    <location>
        <begin position="300"/>
        <end position="322"/>
    </location>
</feature>